<keyword id="KW-0009">Actin-binding</keyword>
<keyword id="KW-0539">Nucleus</keyword>
<keyword id="KW-1185">Reference proteome</keyword>
<keyword id="KW-0833">Ubl conjugation pathway</keyword>
<feature type="chain" id="PRO_0000119912" description="F-box only protein 25">
    <location>
        <begin position="1"/>
        <end position="357"/>
    </location>
</feature>
<feature type="domain" description="F-box">
    <location>
        <begin position="225"/>
        <end position="273"/>
    </location>
</feature>
<feature type="region of interest" description="Interaction with beta-actin" evidence="1">
    <location>
        <begin position="1"/>
        <end position="83"/>
    </location>
</feature>
<feature type="sequence conflict" description="In Ref. 1; BAB25418." evidence="5" ref="1">
    <original>N</original>
    <variation>K</variation>
    <location>
        <position position="237"/>
    </location>
</feature>
<evidence type="ECO:0000250" key="1"/>
<evidence type="ECO:0000269" key="2">
    <source>
    </source>
</evidence>
<evidence type="ECO:0000269" key="3">
    <source>
    </source>
</evidence>
<evidence type="ECO:0000269" key="4">
    <source>
    </source>
</evidence>
<evidence type="ECO:0000305" key="5"/>
<accession>Q9D2Y6</accession>
<accession>Q9D8H3</accession>
<proteinExistence type="evidence at protein level"/>
<protein>
    <recommendedName>
        <fullName>F-box only protein 25</fullName>
    </recommendedName>
</protein>
<reference key="1">
    <citation type="journal article" date="2005" name="Science">
        <title>The transcriptional landscape of the mammalian genome.</title>
        <authorList>
            <person name="Carninci P."/>
            <person name="Kasukawa T."/>
            <person name="Katayama S."/>
            <person name="Gough J."/>
            <person name="Frith M.C."/>
            <person name="Maeda N."/>
            <person name="Oyama R."/>
            <person name="Ravasi T."/>
            <person name="Lenhard B."/>
            <person name="Wells C."/>
            <person name="Kodzius R."/>
            <person name="Shimokawa K."/>
            <person name="Bajic V.B."/>
            <person name="Brenner S.E."/>
            <person name="Batalov S."/>
            <person name="Forrest A.R."/>
            <person name="Zavolan M."/>
            <person name="Davis M.J."/>
            <person name="Wilming L.G."/>
            <person name="Aidinis V."/>
            <person name="Allen J.E."/>
            <person name="Ambesi-Impiombato A."/>
            <person name="Apweiler R."/>
            <person name="Aturaliya R.N."/>
            <person name="Bailey T.L."/>
            <person name="Bansal M."/>
            <person name="Baxter L."/>
            <person name="Beisel K.W."/>
            <person name="Bersano T."/>
            <person name="Bono H."/>
            <person name="Chalk A.M."/>
            <person name="Chiu K.P."/>
            <person name="Choudhary V."/>
            <person name="Christoffels A."/>
            <person name="Clutterbuck D.R."/>
            <person name="Crowe M.L."/>
            <person name="Dalla E."/>
            <person name="Dalrymple B.P."/>
            <person name="de Bono B."/>
            <person name="Della Gatta G."/>
            <person name="di Bernardo D."/>
            <person name="Down T."/>
            <person name="Engstrom P."/>
            <person name="Fagiolini M."/>
            <person name="Faulkner G."/>
            <person name="Fletcher C.F."/>
            <person name="Fukushima T."/>
            <person name="Furuno M."/>
            <person name="Futaki S."/>
            <person name="Gariboldi M."/>
            <person name="Georgii-Hemming P."/>
            <person name="Gingeras T.R."/>
            <person name="Gojobori T."/>
            <person name="Green R.E."/>
            <person name="Gustincich S."/>
            <person name="Harbers M."/>
            <person name="Hayashi Y."/>
            <person name="Hensch T.K."/>
            <person name="Hirokawa N."/>
            <person name="Hill D."/>
            <person name="Huminiecki L."/>
            <person name="Iacono M."/>
            <person name="Ikeo K."/>
            <person name="Iwama A."/>
            <person name="Ishikawa T."/>
            <person name="Jakt M."/>
            <person name="Kanapin A."/>
            <person name="Katoh M."/>
            <person name="Kawasawa Y."/>
            <person name="Kelso J."/>
            <person name="Kitamura H."/>
            <person name="Kitano H."/>
            <person name="Kollias G."/>
            <person name="Krishnan S.P."/>
            <person name="Kruger A."/>
            <person name="Kummerfeld S.K."/>
            <person name="Kurochkin I.V."/>
            <person name="Lareau L.F."/>
            <person name="Lazarevic D."/>
            <person name="Lipovich L."/>
            <person name="Liu J."/>
            <person name="Liuni S."/>
            <person name="McWilliam S."/>
            <person name="Madan Babu M."/>
            <person name="Madera M."/>
            <person name="Marchionni L."/>
            <person name="Matsuda H."/>
            <person name="Matsuzawa S."/>
            <person name="Miki H."/>
            <person name="Mignone F."/>
            <person name="Miyake S."/>
            <person name="Morris K."/>
            <person name="Mottagui-Tabar S."/>
            <person name="Mulder N."/>
            <person name="Nakano N."/>
            <person name="Nakauchi H."/>
            <person name="Ng P."/>
            <person name="Nilsson R."/>
            <person name="Nishiguchi S."/>
            <person name="Nishikawa S."/>
            <person name="Nori F."/>
            <person name="Ohara O."/>
            <person name="Okazaki Y."/>
            <person name="Orlando V."/>
            <person name="Pang K.C."/>
            <person name="Pavan W.J."/>
            <person name="Pavesi G."/>
            <person name="Pesole G."/>
            <person name="Petrovsky N."/>
            <person name="Piazza S."/>
            <person name="Reed J."/>
            <person name="Reid J.F."/>
            <person name="Ring B.Z."/>
            <person name="Ringwald M."/>
            <person name="Rost B."/>
            <person name="Ruan Y."/>
            <person name="Salzberg S.L."/>
            <person name="Sandelin A."/>
            <person name="Schneider C."/>
            <person name="Schoenbach C."/>
            <person name="Sekiguchi K."/>
            <person name="Semple C.A."/>
            <person name="Seno S."/>
            <person name="Sessa L."/>
            <person name="Sheng Y."/>
            <person name="Shibata Y."/>
            <person name="Shimada H."/>
            <person name="Shimada K."/>
            <person name="Silva D."/>
            <person name="Sinclair B."/>
            <person name="Sperling S."/>
            <person name="Stupka E."/>
            <person name="Sugiura K."/>
            <person name="Sultana R."/>
            <person name="Takenaka Y."/>
            <person name="Taki K."/>
            <person name="Tammoja K."/>
            <person name="Tan S.L."/>
            <person name="Tang S."/>
            <person name="Taylor M.S."/>
            <person name="Tegner J."/>
            <person name="Teichmann S.A."/>
            <person name="Ueda H.R."/>
            <person name="van Nimwegen E."/>
            <person name="Verardo R."/>
            <person name="Wei C.L."/>
            <person name="Yagi K."/>
            <person name="Yamanishi H."/>
            <person name="Zabarovsky E."/>
            <person name="Zhu S."/>
            <person name="Zimmer A."/>
            <person name="Hide W."/>
            <person name="Bult C."/>
            <person name="Grimmond S.M."/>
            <person name="Teasdale R.D."/>
            <person name="Liu E.T."/>
            <person name="Brusic V."/>
            <person name="Quackenbush J."/>
            <person name="Wahlestedt C."/>
            <person name="Mattick J.S."/>
            <person name="Hume D.A."/>
            <person name="Kai C."/>
            <person name="Sasaki D."/>
            <person name="Tomaru Y."/>
            <person name="Fukuda S."/>
            <person name="Kanamori-Katayama M."/>
            <person name="Suzuki M."/>
            <person name="Aoki J."/>
            <person name="Arakawa T."/>
            <person name="Iida J."/>
            <person name="Imamura K."/>
            <person name="Itoh M."/>
            <person name="Kato T."/>
            <person name="Kawaji H."/>
            <person name="Kawagashira N."/>
            <person name="Kawashima T."/>
            <person name="Kojima M."/>
            <person name="Kondo S."/>
            <person name="Konno H."/>
            <person name="Nakano K."/>
            <person name="Ninomiya N."/>
            <person name="Nishio T."/>
            <person name="Okada M."/>
            <person name="Plessy C."/>
            <person name="Shibata K."/>
            <person name="Shiraki T."/>
            <person name="Suzuki S."/>
            <person name="Tagami M."/>
            <person name="Waki K."/>
            <person name="Watahiki A."/>
            <person name="Okamura-Oho Y."/>
            <person name="Suzuki H."/>
            <person name="Kawai J."/>
            <person name="Hayashizaki Y."/>
        </authorList>
    </citation>
    <scope>NUCLEOTIDE SEQUENCE [LARGE SCALE MRNA]</scope>
    <source>
        <strain>C57BL/6J</strain>
        <tissue>Cecum</tissue>
    </source>
</reference>
<reference key="2">
    <citation type="journal article" date="2004" name="Genome Res.">
        <title>The status, quality, and expansion of the NIH full-length cDNA project: the Mammalian Gene Collection (MGC).</title>
        <authorList>
            <consortium name="The MGC Project Team"/>
        </authorList>
    </citation>
    <scope>NUCLEOTIDE SEQUENCE [LARGE SCALE MRNA]</scope>
    <source>
        <strain>C57BL/6J</strain>
        <tissue>Kidney</tissue>
        <tissue>Small intestine</tissue>
    </source>
</reference>
<reference key="3">
    <citation type="journal article" date="2006" name="Biochim. Biophys. Acta">
        <title>Characterization of FBX25, encoding a novel brain-expressed F-box protein.</title>
        <authorList>
            <person name="Hagens O."/>
            <person name="Minina E."/>
            <person name="Schweiger S."/>
            <person name="Ropers H.-H."/>
            <person name="Kalscheuer V."/>
        </authorList>
    </citation>
    <scope>TISSUE SPECIFICITY</scope>
    <scope>DEVELOPMENTAL STAGE</scope>
</reference>
<reference key="4">
    <citation type="journal article" date="2006" name="Biochim. Biophys. Acta">
        <title>FBXO25, an F-box protein homologue of atrogin-1, is not induced in atrophying muscle.</title>
        <authorList>
            <person name="Maragno A.L."/>
            <person name="Baqui M.M."/>
            <person name="Gomes M.D."/>
        </authorList>
    </citation>
    <scope>FUNCTION</scope>
    <scope>TISSUE SPECIFICITY</scope>
    <scope>SUBCELLULAR LOCATION</scope>
    <scope>IDENTIFICATION IN A SCF PROTEIN LIGASE COMPLEX</scope>
    <scope>INTERACTION WITH SKP1</scope>
</reference>
<reference key="5">
    <citation type="journal article" date="2008" name="Mol. Biol. Cell">
        <title>FBXO25-associated nuclear domains: a novel subnuclear structure.</title>
        <authorList>
            <person name="Manfiolli A.O."/>
            <person name="Maragno A.L."/>
            <person name="Baqui M.M."/>
            <person name="Yokoo S."/>
            <person name="Teixeira F.R."/>
            <person name="Oliveira E.B."/>
            <person name="Gomes M.D."/>
        </authorList>
    </citation>
    <scope>FUNCTION</scope>
    <scope>TISSUE SPECIFICITY</scope>
    <scope>IDENTIFICATION IN A SCF PROTEIN LIGASE COMPLEX</scope>
    <scope>INTERACTION WITH SKP1</scope>
    <scope>SUBCELLULAR LOCATION</scope>
</reference>
<sequence>MPFLGQDWRSPGWSWIKTEDGWKRCDPCSHELRSEDSQYTINHSIILNSGEEEIFNNECEYAAKKRKKEHFGNDTAAHSFYREKWIYVHKESTKERHGYCTLGEAFNRLDFSSAIQDIRRFTYVVKLLQLIAKSQLTSLSGVAQKNYFNILDKIVQKVLDDHQNPRLIKGLLQDLSSTLGILVRGVGKSVLVGNINIWICRLETVLSWQQQLQNLQVTKQVNTGLTLSDLPLHMLNNILYRFSDGWDIVTLGQVTPTLYMLSEDRRLWKRLCQYHFAEQQFCRHLILSEKGHIEWKLMYFTLQKYYPTKEQYGDTLHFCRHCSILFWKDSGHPCTAADPDSCFTPVSPEHFIDLFKF</sequence>
<organism>
    <name type="scientific">Mus musculus</name>
    <name type="common">Mouse</name>
    <dbReference type="NCBI Taxonomy" id="10090"/>
    <lineage>
        <taxon>Eukaryota</taxon>
        <taxon>Metazoa</taxon>
        <taxon>Chordata</taxon>
        <taxon>Craniata</taxon>
        <taxon>Vertebrata</taxon>
        <taxon>Euteleostomi</taxon>
        <taxon>Mammalia</taxon>
        <taxon>Eutheria</taxon>
        <taxon>Euarchontoglires</taxon>
        <taxon>Glires</taxon>
        <taxon>Rodentia</taxon>
        <taxon>Myomorpha</taxon>
        <taxon>Muroidea</taxon>
        <taxon>Muridae</taxon>
        <taxon>Murinae</taxon>
        <taxon>Mus</taxon>
        <taxon>Mus</taxon>
    </lineage>
</organism>
<dbReference type="EMBL" id="AK008027">
    <property type="protein sequence ID" value="BAB25418.1"/>
    <property type="molecule type" value="mRNA"/>
</dbReference>
<dbReference type="EMBL" id="AK018626">
    <property type="protein sequence ID" value="BAB31315.1"/>
    <property type="molecule type" value="mRNA"/>
</dbReference>
<dbReference type="EMBL" id="BC014749">
    <property type="protein sequence ID" value="AAH14749.1"/>
    <property type="molecule type" value="mRNA"/>
</dbReference>
<dbReference type="CCDS" id="CCDS22118.1"/>
<dbReference type="RefSeq" id="NP_080061.1">
    <property type="nucleotide sequence ID" value="NM_025785.3"/>
</dbReference>
<dbReference type="BioGRID" id="211742">
    <property type="interactions" value="2"/>
</dbReference>
<dbReference type="FunCoup" id="Q9D2Y6">
    <property type="interactions" value="1964"/>
</dbReference>
<dbReference type="STRING" id="10090.ENSMUSP00000147467"/>
<dbReference type="iPTMnet" id="Q9D2Y6"/>
<dbReference type="PhosphoSitePlus" id="Q9D2Y6"/>
<dbReference type="PaxDb" id="10090-ENSMUSP00000039544"/>
<dbReference type="ProteomicsDB" id="272963"/>
<dbReference type="Pumba" id="Q9D2Y6"/>
<dbReference type="Antibodypedia" id="21946">
    <property type="antibodies" value="152 antibodies from 22 providers"/>
</dbReference>
<dbReference type="DNASU" id="66822"/>
<dbReference type="Ensembl" id="ENSMUST00000043520.5">
    <property type="protein sequence ID" value="ENSMUSP00000039544.4"/>
    <property type="gene ID" value="ENSMUSG00000038365.9"/>
</dbReference>
<dbReference type="GeneID" id="66822"/>
<dbReference type="KEGG" id="mmu:66822"/>
<dbReference type="UCSC" id="uc009kys.1">
    <property type="organism name" value="mouse"/>
</dbReference>
<dbReference type="AGR" id="MGI:1914072"/>
<dbReference type="CTD" id="26260"/>
<dbReference type="MGI" id="MGI:1914072">
    <property type="gene designation" value="Fbxo25"/>
</dbReference>
<dbReference type="VEuPathDB" id="HostDB:ENSMUSG00000038365"/>
<dbReference type="eggNOG" id="KOG3926">
    <property type="taxonomic scope" value="Eukaryota"/>
</dbReference>
<dbReference type="GeneTree" id="ENSGT00390000004915"/>
<dbReference type="HOGENOM" id="CLU_065667_0_0_1"/>
<dbReference type="InParanoid" id="Q9D2Y6"/>
<dbReference type="OMA" id="AWDTMAK"/>
<dbReference type="OrthoDB" id="9991467at2759"/>
<dbReference type="PhylomeDB" id="Q9D2Y6"/>
<dbReference type="TreeFam" id="TF313070"/>
<dbReference type="UniPathway" id="UPA00143"/>
<dbReference type="BioGRID-ORCS" id="66822">
    <property type="hits" value="1 hit in 77 CRISPR screens"/>
</dbReference>
<dbReference type="PRO" id="PR:Q9D2Y6"/>
<dbReference type="Proteomes" id="UP000000589">
    <property type="component" value="Chromosome 8"/>
</dbReference>
<dbReference type="RNAct" id="Q9D2Y6">
    <property type="molecule type" value="protein"/>
</dbReference>
<dbReference type="Bgee" id="ENSMUSG00000038365">
    <property type="expression patterns" value="Expressed in small intestine Peyer's patch and 269 other cell types or tissues"/>
</dbReference>
<dbReference type="ExpressionAtlas" id="Q9D2Y6">
    <property type="expression patterns" value="baseline and differential"/>
</dbReference>
<dbReference type="GO" id="GO:0005634">
    <property type="term" value="C:nucleus"/>
    <property type="evidence" value="ECO:0000314"/>
    <property type="project" value="UniProtKB"/>
</dbReference>
<dbReference type="GO" id="GO:0019005">
    <property type="term" value="C:SCF ubiquitin ligase complex"/>
    <property type="evidence" value="ECO:0000314"/>
    <property type="project" value="UniProtKB"/>
</dbReference>
<dbReference type="GO" id="GO:0003779">
    <property type="term" value="F:actin binding"/>
    <property type="evidence" value="ECO:0007669"/>
    <property type="project" value="UniProtKB-KW"/>
</dbReference>
<dbReference type="GO" id="GO:0016567">
    <property type="term" value="P:protein ubiquitination"/>
    <property type="evidence" value="ECO:0000314"/>
    <property type="project" value="UniProtKB"/>
</dbReference>
<dbReference type="CDD" id="cd22099">
    <property type="entry name" value="F-box_FBXO25"/>
    <property type="match status" value="1"/>
</dbReference>
<dbReference type="Gene3D" id="1.20.1280.50">
    <property type="match status" value="1"/>
</dbReference>
<dbReference type="InterPro" id="IPR036047">
    <property type="entry name" value="F-box-like_dom_sf"/>
</dbReference>
<dbReference type="InterPro" id="IPR040394">
    <property type="entry name" value="FBX25/32"/>
</dbReference>
<dbReference type="PANTHER" id="PTHR13123:SF8">
    <property type="entry name" value="F-BOX ONLY PROTEIN 25"/>
    <property type="match status" value="1"/>
</dbReference>
<dbReference type="PANTHER" id="PTHR13123">
    <property type="entry name" value="LD30288P"/>
    <property type="match status" value="1"/>
</dbReference>
<dbReference type="SUPFAM" id="SSF81383">
    <property type="entry name" value="F-box domain"/>
    <property type="match status" value="1"/>
</dbReference>
<comment type="function">
    <text evidence="3 4">Substrate-recognition component of the SCF (SKP1-CUL1-F-box protein)-type E3 ubiquitin ligase complex. May play a role in accumulation of expanded polyglutamine (polyQ) protein huntingtin (HTT).</text>
</comment>
<comment type="pathway">
    <text>Protein modification; protein ubiquitination.</text>
</comment>
<comment type="subunit">
    <text evidence="1">Part of a SCF (SKP1-cullin-F-box) protein ligase complex consisting of FBXO25, SKP1, CUL1 and RBX1. Interacts directly with SKP1 and CUL1. Interacts (via C-terminus) with beta-actin (via N-terminus) (By similarity).</text>
</comment>
<comment type="subcellular location">
    <subcellularLocation>
        <location evidence="3 4">Nucleus</location>
    </subcellularLocation>
    <text>In the nucleus, associates with a specific and novel subnuclear dot-like structure. Colocalized with SKP1.</text>
</comment>
<comment type="tissue specificity">
    <text evidence="2 3 4">Expressed in all tissues tested, except striated muscle (at protein level). Expressed predominantly in the cerebral cortex, the hippocampus and the Purkinje cell layer of the brain. Intestine and kidney show also significant levels.</text>
</comment>
<comment type="developmental stage">
    <text evidence="2">Expressed in neuronal tissues of 14.5 dpc mice.</text>
</comment>
<comment type="domain">
    <text>The F-box is necessary for the interaction with SKP1.</text>
</comment>
<name>FBX25_MOUSE</name>
<gene>
    <name type="primary">Fbxo25</name>
    <name type="synonym">Fbx25</name>
</gene>